<name>CHD1_YEAST</name>
<comment type="function">
    <text evidence="6 7 10 13 14 15 16 17 20 21 22">ATP-dependent chromatin-remodeling factor which functions as substrate recognition component of the transcription regulatory histone acetylation (HAT) complexes SAGA and SLIK. It recognizes H3K4me. SAGA is involved in RNA polymerase II-dependent transcriptional regulation of approximately 10% of yeast genes. At the promoters, SAGA is required for recruitment of the basal transcription machinery. It influences RNA polymerase II transcriptional activity through different activities such as TBP interaction (SPT3, SPT8 and SPT20) and promoter selectivity, interaction with transcription activators (GCN5, ADA2, ADA3 and TRA1), and chromatin modification through histone acetylation (GCN5) and deubiquitination (UBP8). SAGA acetylates nucleosomal histone H3 to some extent (to form H3K9ac, H3K14ac, H3K18ac and H3K23ac). SAGA interacts with DNA via upstream activating sequences (UASs). SLIK is proposed to have partly overlapping functions with SAGA. It preferentially acetylates methylated histone H3, at least after activation at the GAL1-10 locus. Acts in opposition to the FACT complex in regulating polymerase II transcription. Also required for efficient transcription by RNA polymerase I, and more specifically the pol I transcription termination step. Negatively regulates DNA replication. Not only involved in transcription-related chromatin-remodeling, but also required to maintain a specific chromatin configuration across the genome.</text>
</comment>
<comment type="catalytic activity">
    <reaction evidence="7 21">
        <text>ATP + H2O = ADP + phosphate + H(+)</text>
        <dbReference type="Rhea" id="RHEA:13065"/>
        <dbReference type="ChEBI" id="CHEBI:15377"/>
        <dbReference type="ChEBI" id="CHEBI:15378"/>
        <dbReference type="ChEBI" id="CHEBI:30616"/>
        <dbReference type="ChEBI" id="CHEBI:43474"/>
        <dbReference type="ChEBI" id="CHEBI:456216"/>
    </reaction>
</comment>
<comment type="biophysicochemical properties">
    <kinetics>
        <KM evidence="21">10.2 nM for ATP</KM>
    </kinetics>
</comment>
<comment type="subunit">
    <text evidence="8 9 10 14 18 19">Component of the 1.8 MDa SAGA complex, which consists of at least of TRA1, CHD1, SPT7, TAF5, ADA3, SGF73, SPT20/ADA5, SPT8, TAF12, TAF6, HFI1/ADA1, UBP8, GCN5, ADA2, SPT3, SGF29, TAF10, TAF9, SGF11 and SUS1. TAF5, TAF6, TAF9, TAF19, TAF12 and ADA1 seem to be present in 2 copies. SAGA is built of 5 distinct domains with specialized functions. Domain I (containing TRA1) probably represents the activator interaction surface. Domain II (containing TAF5 and TAF6, and probably TAF9 and TAF10), domain III (containing GCN5, TAF10, SPT7, TAF5 and ADA1, and probably ADA2, ADA3 and TAF12), and domain IV (containing HFI1/ADA1 and TAF6, and probably TAF9) are believed to play primarily an architectural role. Domain III also harbors the HAT activity. Domain V (containing SPT3 and SPT20, and probably SPT8) represents the TBP-interacting module, which may be associated transiently with SAGA. Component of the SLIK complex, which consists of at least TRA1, CHD1, SPT7, TAF5, ADA3, SPT20, RTG2, TAF12, TAF6, HFI1, UBP8, GCN5, ADA2, SPT3, SGF29, TAF10 and TAF9. Interacts with RTF1, SPT5 and with the FACT subunits POB3 and SPT16.</text>
</comment>
<comment type="subcellular location">
    <subcellularLocation>
        <location evidence="25">Nucleus</location>
    </subcellularLocation>
</comment>
<comment type="domain">
    <text evidence="1">The 2 chromodomains are involved in the binding to the histone H3 methyllysine at position 4 (H3K4me3).</text>
</comment>
<comment type="domain">
    <text evidence="1">The CHD1 helical C-terminal domain (CHCT) binds DNA and nucleosomes.</text>
</comment>
<comment type="disruption phenotype">
    <text evidence="23">Decreased sensitivity to the cytotoxic effects of 6-azauracil.</text>
</comment>
<comment type="miscellaneous">
    <text evidence="12">Present with 1620 molecules/cell in log phase SD medium.</text>
</comment>
<comment type="similarity">
    <text evidence="24">Belongs to the SNF2/RAD54 helicase family.</text>
</comment>
<organism>
    <name type="scientific">Saccharomyces cerevisiae (strain ATCC 204508 / S288c)</name>
    <name type="common">Baker's yeast</name>
    <dbReference type="NCBI Taxonomy" id="559292"/>
    <lineage>
        <taxon>Eukaryota</taxon>
        <taxon>Fungi</taxon>
        <taxon>Dikarya</taxon>
        <taxon>Ascomycota</taxon>
        <taxon>Saccharomycotina</taxon>
        <taxon>Saccharomycetes</taxon>
        <taxon>Saccharomycetales</taxon>
        <taxon>Saccharomycetaceae</taxon>
        <taxon>Saccharomyces</taxon>
    </lineage>
</organism>
<sequence length="1468" mass="168241">MAAKDISTEVLQNPELYGLRRSHRAAAHQQNYFNDSDDEDDEDNIKQSRRKRMTTIEDDEDEFEDEEGEEDSGEDEDEEDFEEDDDYYGSPIKQNRSKPKSRTKSKSKSKPKSQSEKQSTVKIPTRFSNRQNKTVNYNIDYSDDDLLESEDDYGSEEALSEENVHEASANPQPEDFHGIDIVINHRLKTSLEEGKVLEKTVPDLNNCKENYEFLIKWTDESHLHNTWETYESIGQVRGLKRLDNYCKQFIIEDQQVRLDPYVTAEDIEIMDMERERRLDEFEEFHVPERIIDSQRASLEDGTSQLQYLVKWRRLNYDEATWENATDIVKLAPEQVKHFQNRENSKILPQYSSNYTSQRPRFEKLSVQPPFIKGGELRDFQLTGINWMAFLWSKGDNGILADEMGLGKTVQTVAFISWLIFARRQNGPHIIVVPLSTMPAWLDTFEKWAPDLNCICYMGNQKSRDTIREYEFYTNPRAKGKKTMKFNVLLTTYEYILKDRAELGSIKWQFMAVDEAHRLKNAESSLYESLNSFKVANRMLITGTPLQNNIKELAALVNFLMPGRFTIDQEIDFENQDEEQEEYIHDLHRRIQPFILRRLKKDVEKSLPSKTERILRVELSDVQTEYYKNILTKNYSALTAGAKGGHFSLLNIMNELKKASNHPYLFDNAEERVLQKFGDGKMTRENVLRGLIMSSGKMVLLDQLLTRLKKDGHRVLIFSQMVRMLDILGDYLSIKGINFQRLDGTVPSAQRRISIDHFNSPDSNDFVFLLSTRAGGLGINLMTADTVVIFDSDWNPQADLQAMARAHRIGQKNHVMVYRLVSKDTVEEEVLERARKKMILEYAIISLGVTDGNKYTKKNEPNAGELSAILKFGAGNMFTATDNQKKLEDLNLDDVLNHAEDHVTTPDLGESHLGGEEFLKQFEVTDYKADIDWDDIIPEEELKKLQDEEQKRKDEEYVKEQLEMMNRRDNALKKIKNSVNGDGTAANSDSDDDSTSRSSRRRARANDMDSIGESEVRALYKAILKFGNLKEILDELIADGTLPVKSFEKYGETYDEMMEAAKDCVHEEEKNRKEILEKLEKHATAYRAKLKSGEIKAENQPKDNPLTRLSLKKREKKAVLFNFKGVKSLNAESLLSRVEDLKYLKNLINSNYKDDPLKFSLGNNTPKPVQNWSSNWTKEEDEKLLIGVFKYGYGSWTQIRDDPFLGITDKIFLNEVHNPVAKKSASSSDTTPTPSKKGKGITGSSKKVPGAIHLGRRVDYLLSFLRGGLNTKSPSADIGSKKLPTGPSKKRQRKPANHSKSMTPEITSSEPANGPPSKRMKALPKGPAALINNTRLSPNSPTPPLKSKVSRDNGTRQSSNPSSGSAHEKEYDSMDEEDCRHTMSAIRTSLKRLRRGGKSLDRKEWAKILKTELTTIGNHIESQKGSSRKASPEKYRKHLWSYSANFWPADVKSTKLMAMYDKITESQKK</sequence>
<reference key="1">
    <citation type="journal article" date="1997" name="Nature">
        <title>The nucleotide sequence of Saccharomyces cerevisiae chromosome V.</title>
        <authorList>
            <person name="Dietrich F.S."/>
            <person name="Mulligan J.T."/>
            <person name="Hennessy K.M."/>
            <person name="Yelton M.A."/>
            <person name="Allen E."/>
            <person name="Araujo R."/>
            <person name="Aviles E."/>
            <person name="Berno A."/>
            <person name="Brennan T."/>
            <person name="Carpenter J."/>
            <person name="Chen E."/>
            <person name="Cherry J.M."/>
            <person name="Chung E."/>
            <person name="Duncan M."/>
            <person name="Guzman E."/>
            <person name="Hartzell G."/>
            <person name="Hunicke-Smith S."/>
            <person name="Hyman R.W."/>
            <person name="Kayser A."/>
            <person name="Komp C."/>
            <person name="Lashkari D."/>
            <person name="Lew H."/>
            <person name="Lin D."/>
            <person name="Mosedale D."/>
            <person name="Nakahara K."/>
            <person name="Namath A."/>
            <person name="Norgren R."/>
            <person name="Oefner P."/>
            <person name="Oh C."/>
            <person name="Petel F.X."/>
            <person name="Roberts D."/>
            <person name="Sehl P."/>
            <person name="Schramm S."/>
            <person name="Shogren T."/>
            <person name="Smith V."/>
            <person name="Taylor P."/>
            <person name="Wei Y."/>
            <person name="Botstein D."/>
            <person name="Davis R.W."/>
        </authorList>
    </citation>
    <scope>NUCLEOTIDE SEQUENCE [LARGE SCALE GENOMIC DNA]</scope>
    <source>
        <strain>ATCC 204508 / S288c</strain>
    </source>
</reference>
<reference key="2">
    <citation type="journal article" date="2014" name="G3 (Bethesda)">
        <title>The reference genome sequence of Saccharomyces cerevisiae: Then and now.</title>
        <authorList>
            <person name="Engel S.R."/>
            <person name="Dietrich F.S."/>
            <person name="Fisk D.G."/>
            <person name="Binkley G."/>
            <person name="Balakrishnan R."/>
            <person name="Costanzo M.C."/>
            <person name="Dwight S.S."/>
            <person name="Hitz B.C."/>
            <person name="Karra K."/>
            <person name="Nash R.S."/>
            <person name="Weng S."/>
            <person name="Wong E.D."/>
            <person name="Lloyd P."/>
            <person name="Skrzypek M.S."/>
            <person name="Miyasato S.R."/>
            <person name="Simison M."/>
            <person name="Cherry J.M."/>
        </authorList>
    </citation>
    <scope>GENOME REANNOTATION</scope>
    <source>
        <strain>ATCC 204508 / S288c</strain>
    </source>
</reference>
<reference key="3">
    <citation type="journal article" date="1997" name="Proc. Natl. Acad. Sci. U.S.A.">
        <title>Characterization of the CHD family of proteins.</title>
        <authorList>
            <person name="Woodage T."/>
            <person name="Basrai M.A."/>
            <person name="Baxevanis A.D."/>
            <person name="Hieter P."/>
            <person name="Collins F.S."/>
        </authorList>
    </citation>
    <scope>DISRUPTION PHENOTYPE</scope>
</reference>
<reference key="4">
    <citation type="journal article" date="1999" name="J. Biol. Chem.">
        <title>Expanded lysine acetylation specificity of Gcn5 in native complexes.</title>
        <authorList>
            <person name="Grant P.A."/>
            <person name="Eberharter A."/>
            <person name="John S."/>
            <person name="Cook R.G."/>
            <person name="Turner B.M."/>
            <person name="Workman J.L."/>
        </authorList>
    </citation>
    <scope>FUNCTION IN HISTONE ACETYLATION AT THE SAGA COMPLEX</scope>
</reference>
<reference key="5">
    <citation type="journal article" date="2000" name="EMBO J.">
        <title>The chromo domain protein chd1p from budding yeast is an ATP-dependent chromatin-modifying factor.</title>
        <authorList>
            <person name="Tran H.G."/>
            <person name="Steger D.J."/>
            <person name="Iyer V.R."/>
            <person name="Johnson A.D."/>
        </authorList>
    </citation>
    <scope>FUNCTION</scope>
    <scope>CATALYTIC ACTIVITY</scope>
</reference>
<reference key="6">
    <citation type="journal article" date="2002" name="Mol. Cell. Biol.">
        <title>RNA polymerase II elongation factors of Saccharomyces cerevisiae: a targeted proteomics approach.</title>
        <authorList>
            <person name="Krogan N.J."/>
            <person name="Kim M."/>
            <person name="Ahn S.H."/>
            <person name="Zhong G."/>
            <person name="Kobor M.S."/>
            <person name="Cagney G."/>
            <person name="Emili A."/>
            <person name="Shilatifard A."/>
            <person name="Buratowski S."/>
            <person name="Greenblatt J.F."/>
        </authorList>
    </citation>
    <scope>INTERACTION WITH POB3 AND SPT16</scope>
</reference>
<reference key="7">
    <citation type="journal article" date="2002" name="Mol. Cell. Biol.">
        <title>The novel SLIK histone acetyltransferase complex functions in the yeast retrograde response pathway.</title>
        <authorList>
            <person name="Pray-Grant M.G."/>
            <person name="Schieltz D."/>
            <person name="McMahon S.J."/>
            <person name="Wood J.M."/>
            <person name="Kennedy E.L."/>
            <person name="Cook R.G."/>
            <person name="Workman J.L."/>
            <person name="Yates J.R. III"/>
            <person name="Grant P.A."/>
        </authorList>
    </citation>
    <scope>IDENTIFICATION IN THE SLIK COMPLEX</scope>
</reference>
<reference key="8">
    <citation type="journal article" date="2003" name="EMBO J.">
        <title>Chromatin remodeling protein Chd1 interacts with transcription elongation factors and localizes to transcribed genes.</title>
        <authorList>
            <person name="Simic R."/>
            <person name="Lindstrom D.L."/>
            <person name="Tran H.G."/>
            <person name="Roinick K.L."/>
            <person name="Costa P.J."/>
            <person name="Johnson A.D."/>
            <person name="Hartzog G.A."/>
            <person name="Arndt K.M."/>
        </authorList>
    </citation>
    <scope>FUNCTION</scope>
    <scope>SUBCELLULAR LOCATION</scope>
    <scope>INTERACTION WITH RTF1 AND SPT5</scope>
</reference>
<reference key="9">
    <citation type="journal article" date="2003" name="Mol. Cell. Biol.">
        <title>Replication-independent assembly of nucleosome arrays in a novel yeast chromatin reconstitution system involves antisilencing factor Asf1p and chromodomain protein Chd1p.</title>
        <authorList>
            <person name="Robinson K.M."/>
            <person name="Schultz M.C."/>
        </authorList>
    </citation>
    <scope>FUNCTION</scope>
</reference>
<reference key="10">
    <citation type="journal article" date="2003" name="Nature">
        <title>Global analysis of protein expression in yeast.</title>
        <authorList>
            <person name="Ghaemmaghami S."/>
            <person name="Huh W.-K."/>
            <person name="Bower K."/>
            <person name="Howson R.W."/>
            <person name="Belle A."/>
            <person name="Dephoure N."/>
            <person name="O'Shea E.K."/>
            <person name="Weissman J.S."/>
        </authorList>
    </citation>
    <scope>LEVEL OF PROTEIN EXPRESSION [LARGE SCALE ANALYSIS]</scope>
</reference>
<reference key="11">
    <citation type="journal article" date="2003" name="Nat. Biotechnol.">
        <title>A proteomics approach to understanding protein ubiquitination.</title>
        <authorList>
            <person name="Peng J."/>
            <person name="Schwartz D."/>
            <person name="Elias J.E."/>
            <person name="Thoreen C.C."/>
            <person name="Cheng D."/>
            <person name="Marsischky G."/>
            <person name="Roelofs J."/>
            <person name="Finley D."/>
            <person name="Gygi S.P."/>
        </authorList>
    </citation>
    <scope>UBIQUITINATION [LARGE SCALE ANALYSIS] AT LYS-1144</scope>
    <scope>IDENTIFICATION BY MASS SPECTROMETRY</scope>
    <source>
        <strain>SUB592</strain>
    </source>
</reference>
<reference key="12">
    <citation type="journal article" date="2005" name="Nature">
        <title>Chd1 chromodomain links histone H3 methylation with SAGA- and SLIK-dependent acetylation.</title>
        <authorList>
            <person name="Pray-Grant M.G."/>
            <person name="Daniel J.A."/>
            <person name="Schieltz D."/>
            <person name="Yates J.R. III"/>
            <person name="Grant P.A."/>
        </authorList>
    </citation>
    <scope>IDENTIFICATION IN THE SAGA COMPLEX</scope>
    <scope>IDENTIFICATION IN THE SLIK COMPLEX</scope>
    <scope>FUNCTION IN SUBSTRATE RECOGNITION OF THE SLIK COMPLEX</scope>
    <scope>INTERACTION WITH HISTONE H3</scope>
    <scope>MUTAGENESIS OF GLU-220; HIS-222; LEU-314 AND TYR-316</scope>
</reference>
<reference key="13">
    <citation type="journal article" date="2006" name="J. Biol. Chem.">
        <title>Analysis of nucleosome repositioning by yeast ISWI and Chd1 chromatin remodeling complexes.</title>
        <authorList>
            <person name="Stockdale C."/>
            <person name="Flaus A."/>
            <person name="Ferreira H."/>
            <person name="Owen-Hughes T."/>
        </authorList>
    </citation>
    <scope>FUNCTION</scope>
</reference>
<reference key="14">
    <citation type="journal article" date="2006" name="Mol. Microbiol.">
        <title>The ISWI and CHD1 chromatin remodelling activities influence ADH2 expression and chromatin organization.</title>
        <authorList>
            <person name="Xella B."/>
            <person name="Goding C."/>
            <person name="Agricola E."/>
            <person name="Di Mauro E."/>
            <person name="Caserta M."/>
        </authorList>
    </citation>
    <scope>FUNCTION</scope>
</reference>
<reference key="15">
    <citation type="journal article" date="2007" name="J. Mol. Biol.">
        <title>Histone modifications influence the action of Snf2 family remodelling enzymes by different mechanisms.</title>
        <authorList>
            <person name="Ferreira H."/>
            <person name="Flaus A."/>
            <person name="Owen-Hughes T."/>
        </authorList>
    </citation>
    <scope>FUNCTION</scope>
    <scope>CATALYTIC ACTIVITY</scope>
    <scope>BIOPHYSICOCHEMICAL PROPERTIES</scope>
</reference>
<reference key="16">
    <citation type="journal article" date="2007" name="J. Proteome Res.">
        <title>Large-scale phosphorylation analysis of alpha-factor-arrested Saccharomyces cerevisiae.</title>
        <authorList>
            <person name="Li X."/>
            <person name="Gerber S.A."/>
            <person name="Rudner A.D."/>
            <person name="Beausoleil S.A."/>
            <person name="Haas W."/>
            <person name="Villen J."/>
            <person name="Elias J.E."/>
            <person name="Gygi S.P."/>
        </authorList>
    </citation>
    <scope>PHOSPHORYLATION [LARGE SCALE ANALYSIS] AT SER-36</scope>
    <scope>IDENTIFICATION BY MASS SPECTROMETRY [LARGE SCALE ANALYSIS]</scope>
    <source>
        <strain>ADR376</strain>
    </source>
</reference>
<reference key="17">
    <citation type="journal article" date="2007" name="Mol. Cell. Biol.">
        <title>Rtf1 is a multifunctional component of the Paf1 complex that regulates gene expression by directing cotranscriptional histone modification.</title>
        <authorList>
            <person name="Warner M.H."/>
            <person name="Roinick K.L."/>
            <person name="Arndt K.M."/>
        </authorList>
    </citation>
    <scope>INTERACTION WITH RTF1</scope>
</reference>
<reference key="18">
    <citation type="journal article" date="2007" name="Mol. Cell. Biol.">
        <title>Chd1 and yFACT act in opposition in regulating transcription.</title>
        <authorList>
            <person name="Biswas D."/>
            <person name="Dutta-Biswas R."/>
            <person name="Stillman D.J."/>
        </authorList>
    </citation>
    <scope>FUNCTION</scope>
</reference>
<reference key="19">
    <citation type="journal article" date="2007" name="Nat. Struct. Mol. Biol.">
        <title>RNA polymerase I in yeast transcribes dynamic nucleosomal rDNA.</title>
        <authorList>
            <person name="Jones H.S."/>
            <person name="Kawauchi J."/>
            <person name="Braglia P."/>
            <person name="Alen C.M."/>
            <person name="Kent N.A."/>
            <person name="Proudfoot N.J."/>
        </authorList>
    </citation>
    <scope>ASSOCIATION WITH RDNA</scope>
    <scope>FUNCTION</scope>
</reference>
<reference key="20">
    <citation type="journal article" date="2007" name="Proc. Natl. Acad. Sci. U.S.A.">
        <title>Analysis of phosphorylation sites on proteins from Saccharomyces cerevisiae by electron transfer dissociation (ETD) mass spectrometry.</title>
        <authorList>
            <person name="Chi A."/>
            <person name="Huttenhower C."/>
            <person name="Geer L.Y."/>
            <person name="Coon J.J."/>
            <person name="Syka J.E.P."/>
            <person name="Bai D.L."/>
            <person name="Shabanowitz J."/>
            <person name="Burke D.J."/>
            <person name="Troyanskaya O.G."/>
            <person name="Hunt D.F."/>
        </authorList>
    </citation>
    <scope>PHOSPHORYLATION [LARGE SCALE ANALYSIS] AT SER-1364</scope>
    <scope>IDENTIFICATION BY MASS SPECTROMETRY [LARGE SCALE ANALYSIS]</scope>
</reference>
<reference key="21">
    <citation type="journal article" date="2008" name="Genetics">
        <title>A role for Chd1 and Set2 in negatively regulating DNA replication in Saccharomyces cerevisiae.</title>
        <authorList>
            <person name="Biswas D."/>
            <person name="Takahata S."/>
            <person name="Xin H."/>
            <person name="Dutta-Biswas R."/>
            <person name="Yu Y."/>
            <person name="Formosa T."/>
            <person name="Stillman D.J."/>
        </authorList>
    </citation>
    <scope>FUNCTION</scope>
</reference>
<reference key="22">
    <citation type="journal article" date="2008" name="Mol. Cell. Proteomics">
        <title>A multidimensional chromatography technology for in-depth phosphoproteome analysis.</title>
        <authorList>
            <person name="Albuquerque C.P."/>
            <person name="Smolka M.B."/>
            <person name="Payne S.H."/>
            <person name="Bafna V."/>
            <person name="Eng J."/>
            <person name="Zhou H."/>
        </authorList>
    </citation>
    <scope>PHOSPHORYLATION [LARGE SCALE ANALYSIS] AT SER-36; SER-987; SER-989; SER-1336 AND SER-1372</scope>
    <scope>IDENTIFICATION BY MASS SPECTROMETRY [LARGE SCALE ANALYSIS]</scope>
</reference>
<reference key="23">
    <citation type="journal article" date="2009" name="Science">
        <title>Global analysis of Cdk1 substrate phosphorylation sites provides insights into evolution.</title>
        <authorList>
            <person name="Holt L.J."/>
            <person name="Tuch B.B."/>
            <person name="Villen J."/>
            <person name="Johnson A.D."/>
            <person name="Gygi S.P."/>
            <person name="Morgan D.O."/>
        </authorList>
    </citation>
    <scope>PHOSPHORYLATION [LARGE SCALE ANALYSIS] AT SER-36; SER-72; SER-987; SER-989 AND SER-1336</scope>
    <scope>IDENTIFICATION BY MASS SPECTROMETRY [LARGE SCALE ANALYSIS]</scope>
</reference>
<reference key="24">
    <citation type="journal article" date="2012" name="Proc. Natl. Acad. Sci. U.S.A.">
        <title>N-terminal acetylome analyses and functional insights of the N-terminal acetyltransferase NatB.</title>
        <authorList>
            <person name="Van Damme P."/>
            <person name="Lasa M."/>
            <person name="Polevoda B."/>
            <person name="Gazquez C."/>
            <person name="Elosegui-Artola A."/>
            <person name="Kim D.S."/>
            <person name="De Juan-Pardo E."/>
            <person name="Demeyer K."/>
            <person name="Hole K."/>
            <person name="Larrea E."/>
            <person name="Timmerman E."/>
            <person name="Prieto J."/>
            <person name="Arnesen T."/>
            <person name="Sherman F."/>
            <person name="Gevaert K."/>
            <person name="Aldabe R."/>
        </authorList>
    </citation>
    <scope>IDENTIFICATION BY MASS SPECTROMETRY [LARGE SCALE ANALYSIS]</scope>
</reference>
<reference key="25">
    <citation type="journal article" date="2004" name="Mol. Cell">
        <title>Molecular architecture of the S. cerevisiae SAGA complex.</title>
        <authorList>
            <person name="Wu P.Y."/>
            <person name="Ruhlmann C."/>
            <person name="Winston F."/>
            <person name="Schultz P."/>
        </authorList>
    </citation>
    <scope>3D-STRUCTURE MODELING OF THE SAGA COMPLEX</scope>
</reference>
<reference key="26">
    <citation type="journal article" date="2007" name="J. Mol. Biol.">
        <title>Structural polymorphism of chromodomains in Chd1.</title>
        <authorList>
            <person name="Okuda M."/>
            <person name="Horikoshi M."/>
            <person name="Nishimura Y."/>
        </authorList>
    </citation>
    <scope>STRUCTURE BY NMR OF 172-252</scope>
    <scope>DOMAIN</scope>
</reference>
<reference key="27">
    <citation type="journal article" date="2007" name="J. Mol. Biol.">
        <title>Molecular implications of evolutionary differences in CHD double chromodomains.</title>
        <authorList>
            <person name="Flanagan J.F."/>
            <person name="Blus B.J."/>
            <person name="Kim D."/>
            <person name="Clines K.L."/>
            <person name="Rastinejad F."/>
            <person name="Khorasanizadeh S."/>
        </authorList>
    </citation>
    <scope>X-RAY CRYSTALLOGRAPHY (2.2 ANGSTROMS) OF 174-339</scope>
    <scope>DOMAIN</scope>
    <scope>INTERACTION WITH HISTONE H3K4ME3</scope>
    <scope>MUTAGENESIS OF GLU-220</scope>
</reference>
<feature type="chain" id="PRO_0000080237" description="Chromo domain-containing protein 1">
    <location>
        <begin position="1"/>
        <end position="1468"/>
    </location>
</feature>
<feature type="domain" description="Chromo 1" evidence="2">
    <location>
        <begin position="195"/>
        <end position="257"/>
    </location>
</feature>
<feature type="domain" description="Chromo 2" evidence="2">
    <location>
        <begin position="285"/>
        <end position="350"/>
    </location>
</feature>
<feature type="domain" description="Helicase ATP-binding" evidence="3">
    <location>
        <begin position="388"/>
        <end position="562"/>
    </location>
</feature>
<feature type="domain" description="Helicase C-terminal" evidence="4">
    <location>
        <begin position="699"/>
        <end position="860"/>
    </location>
</feature>
<feature type="region of interest" description="Disordered" evidence="5">
    <location>
        <begin position="21"/>
        <end position="176"/>
    </location>
</feature>
<feature type="region of interest" description="Disordered" evidence="5">
    <location>
        <begin position="974"/>
        <end position="1007"/>
    </location>
</feature>
<feature type="region of interest" description="Disordered" evidence="5">
    <location>
        <begin position="1220"/>
        <end position="1247"/>
    </location>
</feature>
<feature type="region of interest" description="Disordered" evidence="5">
    <location>
        <begin position="1270"/>
        <end position="1378"/>
    </location>
</feature>
<feature type="short sequence motif" description="DEAH box">
    <location>
        <begin position="513"/>
        <end position="516"/>
    </location>
</feature>
<feature type="compositionally biased region" description="Acidic residues" evidence="5">
    <location>
        <begin position="56"/>
        <end position="87"/>
    </location>
</feature>
<feature type="compositionally biased region" description="Basic residues" evidence="5">
    <location>
        <begin position="95"/>
        <end position="111"/>
    </location>
</feature>
<feature type="compositionally biased region" description="Polar residues" evidence="5">
    <location>
        <begin position="126"/>
        <end position="139"/>
    </location>
</feature>
<feature type="compositionally biased region" description="Acidic residues" evidence="5">
    <location>
        <begin position="141"/>
        <end position="160"/>
    </location>
</feature>
<feature type="compositionally biased region" description="Low complexity" evidence="5">
    <location>
        <begin position="1221"/>
        <end position="1234"/>
    </location>
</feature>
<feature type="compositionally biased region" description="Basic residues" evidence="5">
    <location>
        <begin position="1287"/>
        <end position="1296"/>
    </location>
</feature>
<feature type="compositionally biased region" description="Polar residues" evidence="5">
    <location>
        <begin position="1297"/>
        <end position="1310"/>
    </location>
</feature>
<feature type="compositionally biased region" description="Polar residues" evidence="5">
    <location>
        <begin position="1354"/>
        <end position="1364"/>
    </location>
</feature>
<feature type="binding site" evidence="3">
    <location>
        <begin position="401"/>
        <end position="408"/>
    </location>
    <ligand>
        <name>ATP</name>
        <dbReference type="ChEBI" id="CHEBI:30616"/>
    </ligand>
</feature>
<feature type="modified residue" description="Phosphoserine" evidence="27 28 29">
    <location>
        <position position="36"/>
    </location>
</feature>
<feature type="modified residue" description="Phosphoserine" evidence="29">
    <location>
        <position position="72"/>
    </location>
</feature>
<feature type="modified residue" description="Phosphoserine" evidence="28 29">
    <location>
        <position position="987"/>
    </location>
</feature>
<feature type="modified residue" description="Phosphoserine" evidence="28 29">
    <location>
        <position position="989"/>
    </location>
</feature>
<feature type="modified residue" description="Phosphoserine" evidence="28 29">
    <location>
        <position position="1336"/>
    </location>
</feature>
<feature type="modified residue" description="Phosphoserine" evidence="26">
    <location>
        <position position="1364"/>
    </location>
</feature>
<feature type="modified residue" description="Phosphoserine" evidence="28">
    <location>
        <position position="1372"/>
    </location>
</feature>
<feature type="cross-link" description="Glycyl lysine isopeptide (Lys-Gly) (interchain with G-Cter in ubiquitin)" evidence="11">
    <location>
        <position position="1144"/>
    </location>
</feature>
<feature type="mutagenesis site" description="No interaction with methylated histone H3 'K-4'." evidence="14 18">
    <original>E</original>
    <variation>L</variation>
    <variation>W</variation>
    <location>
        <position position="220"/>
    </location>
</feature>
<feature type="mutagenesis site" description="Confers interaction with methylated histone H3 'K-4'." evidence="14">
    <original>H</original>
    <variation>Y</variation>
    <location>
        <position position="222"/>
    </location>
</feature>
<feature type="mutagenesis site" description="No effect on interaction with methylated histone H3 'K-4'." evidence="14">
    <original>L</original>
    <variation>Y</variation>
    <location>
        <position position="314"/>
    </location>
</feature>
<feature type="mutagenesis site" description="Disrupts interaction with methylated histone H3 'K-4'; abrogates histone acetylation activity of SLIK." evidence="14">
    <original>Y</original>
    <variation>E</variation>
    <location>
        <position position="316"/>
    </location>
</feature>
<feature type="helix" evidence="36">
    <location>
        <begin position="144"/>
        <end position="146"/>
    </location>
</feature>
<feature type="strand" evidence="32">
    <location>
        <begin position="179"/>
        <end position="187"/>
    </location>
</feature>
<feature type="turn" evidence="30">
    <location>
        <begin position="190"/>
        <end position="192"/>
    </location>
</feature>
<feature type="helix" evidence="32">
    <location>
        <begin position="193"/>
        <end position="196"/>
    </location>
</feature>
<feature type="helix" evidence="32">
    <location>
        <begin position="204"/>
        <end position="210"/>
    </location>
</feature>
<feature type="strand" evidence="32">
    <location>
        <begin position="211"/>
        <end position="217"/>
    </location>
</feature>
<feature type="helix" evidence="32">
    <location>
        <begin position="222"/>
        <end position="224"/>
    </location>
</feature>
<feature type="strand" evidence="32">
    <location>
        <begin position="226"/>
        <end position="228"/>
    </location>
</feature>
<feature type="helix" evidence="32">
    <location>
        <begin position="230"/>
        <end position="233"/>
    </location>
</feature>
<feature type="strand" evidence="30">
    <location>
        <begin position="234"/>
        <end position="237"/>
    </location>
</feature>
<feature type="helix" evidence="32">
    <location>
        <begin position="239"/>
        <end position="249"/>
    </location>
</feature>
<feature type="helix" evidence="32">
    <location>
        <begin position="251"/>
        <end position="258"/>
    </location>
</feature>
<feature type="helix" evidence="32">
    <location>
        <begin position="264"/>
        <end position="283"/>
    </location>
</feature>
<feature type="strand" evidence="32">
    <location>
        <begin position="286"/>
        <end position="297"/>
    </location>
</feature>
<feature type="strand" evidence="31">
    <location>
        <begin position="299"/>
        <end position="301"/>
    </location>
</feature>
<feature type="strand" evidence="32">
    <location>
        <begin position="303"/>
        <end position="311"/>
    </location>
</feature>
<feature type="strand" evidence="35">
    <location>
        <begin position="316"/>
        <end position="318"/>
    </location>
</feature>
<feature type="strand" evidence="32">
    <location>
        <begin position="320"/>
        <end position="323"/>
    </location>
</feature>
<feature type="helix" evidence="32">
    <location>
        <begin position="324"/>
        <end position="330"/>
    </location>
</feature>
<feature type="helix" evidence="32">
    <location>
        <begin position="332"/>
        <end position="338"/>
    </location>
</feature>
<feature type="helix" evidence="36">
    <location>
        <begin position="348"/>
        <end position="350"/>
    </location>
</feature>
<feature type="helix" evidence="36">
    <location>
        <begin position="378"/>
        <end position="393"/>
    </location>
</feature>
<feature type="strand" evidence="37">
    <location>
        <begin position="397"/>
        <end position="399"/>
    </location>
</feature>
<feature type="strand" evidence="35">
    <location>
        <begin position="403"/>
        <end position="405"/>
    </location>
</feature>
<feature type="helix" evidence="36">
    <location>
        <begin position="407"/>
        <end position="420"/>
    </location>
</feature>
<feature type="strand" evidence="36">
    <location>
        <begin position="428"/>
        <end position="432"/>
    </location>
</feature>
<feature type="helix" evidence="36">
    <location>
        <begin position="434"/>
        <end position="436"/>
    </location>
</feature>
<feature type="helix" evidence="36">
    <location>
        <begin position="437"/>
        <end position="446"/>
    </location>
</feature>
<feature type="strand" evidence="36">
    <location>
        <begin position="453"/>
        <end position="455"/>
    </location>
</feature>
<feature type="helix" evidence="36">
    <location>
        <begin position="460"/>
        <end position="470"/>
    </location>
</feature>
<feature type="strand" evidence="37">
    <location>
        <begin position="472"/>
        <end position="474"/>
    </location>
</feature>
<feature type="strand" evidence="37">
    <location>
        <begin position="482"/>
        <end position="484"/>
    </location>
</feature>
<feature type="strand" evidence="36">
    <location>
        <begin position="486"/>
        <end position="491"/>
    </location>
</feature>
<feature type="helix" evidence="36">
    <location>
        <begin position="492"/>
        <end position="497"/>
    </location>
</feature>
<feature type="helix" evidence="36">
    <location>
        <begin position="499"/>
        <end position="503"/>
    </location>
</feature>
<feature type="strand" evidence="36">
    <location>
        <begin position="507"/>
        <end position="514"/>
    </location>
</feature>
<feature type="helix" evidence="36">
    <location>
        <begin position="515"/>
        <end position="518"/>
    </location>
</feature>
<feature type="helix" evidence="36">
    <location>
        <begin position="524"/>
        <end position="530"/>
    </location>
</feature>
<feature type="strand" evidence="36">
    <location>
        <begin position="534"/>
        <end position="540"/>
    </location>
</feature>
<feature type="strand" evidence="36">
    <location>
        <begin position="546"/>
        <end position="549"/>
    </location>
</feature>
<feature type="helix" evidence="36">
    <location>
        <begin position="550"/>
        <end position="559"/>
    </location>
</feature>
<feature type="turn" evidence="36">
    <location>
        <begin position="572"/>
        <end position="574"/>
    </location>
</feature>
<feature type="helix" evidence="36">
    <location>
        <begin position="577"/>
        <end position="589"/>
    </location>
</feature>
<feature type="helix" evidence="36">
    <location>
        <begin position="591"/>
        <end position="593"/>
    </location>
</feature>
<feature type="turn" evidence="36">
    <location>
        <begin position="599"/>
        <end position="601"/>
    </location>
</feature>
<feature type="strand" evidence="36">
    <location>
        <begin position="609"/>
        <end position="616"/>
    </location>
</feature>
<feature type="helix" evidence="36">
    <location>
        <begin position="620"/>
        <end position="630"/>
    </location>
</feature>
<feature type="helix" evidence="36">
    <location>
        <begin position="634"/>
        <end position="638"/>
    </location>
</feature>
<feature type="strand" evidence="36">
    <location>
        <begin position="642"/>
        <end position="644"/>
    </location>
</feature>
<feature type="helix" evidence="36">
    <location>
        <begin position="651"/>
        <end position="660"/>
    </location>
</feature>
<feature type="helix" evidence="36">
    <location>
        <begin position="662"/>
        <end position="664"/>
    </location>
</feature>
<feature type="helix" evidence="36">
    <location>
        <begin position="668"/>
        <end position="674"/>
    </location>
</feature>
<feature type="helix" evidence="37">
    <location>
        <begin position="676"/>
        <end position="678"/>
    </location>
</feature>
<feature type="turn" evidence="36">
    <location>
        <begin position="683"/>
        <end position="685"/>
    </location>
</feature>
<feature type="helix" evidence="36">
    <location>
        <begin position="686"/>
        <end position="692"/>
    </location>
</feature>
<feature type="helix" evidence="36">
    <location>
        <begin position="695"/>
        <end position="709"/>
    </location>
</feature>
<feature type="strand" evidence="36">
    <location>
        <begin position="714"/>
        <end position="719"/>
    </location>
</feature>
<feature type="helix" evidence="36">
    <location>
        <begin position="721"/>
        <end position="734"/>
    </location>
</feature>
<feature type="strand" evidence="36">
    <location>
        <begin position="738"/>
        <end position="741"/>
    </location>
</feature>
<feature type="helix" evidence="36">
    <location>
        <begin position="747"/>
        <end position="757"/>
    </location>
</feature>
<feature type="strand" evidence="35">
    <location>
        <begin position="759"/>
        <end position="761"/>
    </location>
</feature>
<feature type="strand" evidence="36">
    <location>
        <begin position="766"/>
        <end position="772"/>
    </location>
</feature>
<feature type="strand" evidence="36">
    <location>
        <begin position="785"/>
        <end position="788"/>
    </location>
</feature>
<feature type="helix" evidence="36">
    <location>
        <begin position="795"/>
        <end position="802"/>
    </location>
</feature>
<feature type="turn" evidence="36">
    <location>
        <begin position="803"/>
        <end position="805"/>
    </location>
</feature>
<feature type="strand" evidence="35">
    <location>
        <begin position="807"/>
        <end position="809"/>
    </location>
</feature>
<feature type="strand" evidence="36">
    <location>
        <begin position="814"/>
        <end position="821"/>
    </location>
</feature>
<feature type="helix" evidence="36">
    <location>
        <begin position="826"/>
        <end position="843"/>
    </location>
</feature>
<feature type="turn" evidence="36">
    <location>
        <begin position="844"/>
        <end position="846"/>
    </location>
</feature>
<feature type="helix" evidence="33">
    <location>
        <begin position="1012"/>
        <end position="1025"/>
    </location>
</feature>
<feature type="helix" evidence="34">
    <location>
        <begin position="1029"/>
        <end position="1031"/>
    </location>
</feature>
<feature type="helix" evidence="33">
    <location>
        <begin position="1032"/>
        <end position="1037"/>
    </location>
</feature>
<feature type="helix" evidence="33">
    <location>
        <begin position="1046"/>
        <end position="1091"/>
    </location>
</feature>
<feature type="strand" evidence="33">
    <location>
        <begin position="1092"/>
        <end position="1094"/>
    </location>
</feature>
<feature type="strand" evidence="34">
    <location>
        <begin position="1096"/>
        <end position="1098"/>
    </location>
</feature>
<feature type="strand" evidence="34">
    <location>
        <begin position="1101"/>
        <end position="1103"/>
    </location>
</feature>
<feature type="helix" evidence="33">
    <location>
        <begin position="1104"/>
        <end position="1112"/>
    </location>
</feature>
<feature type="strand" evidence="34">
    <location>
        <begin position="1119"/>
        <end position="1122"/>
    </location>
</feature>
<feature type="strand" evidence="34">
    <location>
        <begin position="1125"/>
        <end position="1129"/>
    </location>
</feature>
<feature type="helix" evidence="33">
    <location>
        <begin position="1130"/>
        <end position="1150"/>
    </location>
</feature>
<feature type="helix" evidence="33">
    <location>
        <begin position="1155"/>
        <end position="1157"/>
    </location>
</feature>
<feature type="strand" evidence="33">
    <location>
        <begin position="1171"/>
        <end position="1173"/>
    </location>
</feature>
<feature type="helix" evidence="33">
    <location>
        <begin position="1177"/>
        <end position="1190"/>
    </location>
</feature>
<feature type="helix" evidence="33">
    <location>
        <begin position="1195"/>
        <end position="1200"/>
    </location>
</feature>
<feature type="turn" evidence="33">
    <location>
        <begin position="1202"/>
        <end position="1204"/>
    </location>
</feature>
<feature type="helix" evidence="33">
    <location>
        <begin position="1207"/>
        <end position="1209"/>
    </location>
</feature>
<feature type="helix" evidence="33">
    <location>
        <begin position="1250"/>
        <end position="1264"/>
    </location>
</feature>
<feature type="turn" evidence="33">
    <location>
        <begin position="1265"/>
        <end position="1268"/>
    </location>
</feature>
<proteinExistence type="evidence at protein level"/>
<keyword id="KW-0002">3D-structure</keyword>
<keyword id="KW-0067">ATP-binding</keyword>
<keyword id="KW-0156">Chromatin regulator</keyword>
<keyword id="KW-0238">DNA-binding</keyword>
<keyword id="KW-0378">Hydrolase</keyword>
<keyword id="KW-1017">Isopeptide bond</keyword>
<keyword id="KW-0547">Nucleotide-binding</keyword>
<keyword id="KW-0539">Nucleus</keyword>
<keyword id="KW-0597">Phosphoprotein</keyword>
<keyword id="KW-1185">Reference proteome</keyword>
<keyword id="KW-0677">Repeat</keyword>
<keyword id="KW-0804">Transcription</keyword>
<keyword id="KW-0805">Transcription regulation</keyword>
<keyword id="KW-0832">Ubl conjugation</keyword>
<protein>
    <recommendedName>
        <fullName>Chromo domain-containing protein 1</fullName>
        <ecNumber evidence="7 21">3.6.4.-</ecNumber>
    </recommendedName>
    <alternativeName>
        <fullName>ATP-dependent helicase CHD1</fullName>
    </alternativeName>
</protein>
<gene>
    <name type="primary">CHD1</name>
    <name type="ordered locus">YER164W</name>
    <name type="ORF">SYGP-ORF4</name>
</gene>
<dbReference type="EC" id="3.6.4.-" evidence="7 21"/>
<dbReference type="EMBL" id="U18917">
    <property type="protein sequence ID" value="AAB64691.1"/>
    <property type="molecule type" value="Genomic_DNA"/>
</dbReference>
<dbReference type="EMBL" id="BK006939">
    <property type="protein sequence ID" value="DAA07826.1"/>
    <property type="molecule type" value="Genomic_DNA"/>
</dbReference>
<dbReference type="PIR" id="S30818">
    <property type="entry name" value="S30818"/>
</dbReference>
<dbReference type="RefSeq" id="NP_011091.1">
    <property type="nucleotide sequence ID" value="NM_001179054.1"/>
</dbReference>
<dbReference type="PDB" id="2DY7">
    <property type="method" value="NMR"/>
    <property type="chains" value="A=172-252"/>
</dbReference>
<dbReference type="PDB" id="2DY8">
    <property type="method" value="NMR"/>
    <property type="chains" value="A=279-347"/>
</dbReference>
<dbReference type="PDB" id="2H1E">
    <property type="method" value="X-ray"/>
    <property type="resolution" value="2.20 A"/>
    <property type="chains" value="A/B=174-339"/>
</dbReference>
<dbReference type="PDB" id="2XB0">
    <property type="method" value="X-ray"/>
    <property type="resolution" value="2.00 A"/>
    <property type="chains" value="X=1009-1274"/>
</dbReference>
<dbReference type="PDB" id="3MWY">
    <property type="method" value="X-ray"/>
    <property type="resolution" value="3.70 A"/>
    <property type="chains" value="W=142-939"/>
</dbReference>
<dbReference type="PDB" id="3TED">
    <property type="method" value="X-ray"/>
    <property type="resolution" value="2.00 A"/>
    <property type="chains" value="A=1006-1274"/>
</dbReference>
<dbReference type="PDB" id="5J70">
    <property type="method" value="X-ray"/>
    <property type="resolution" value="2.96 A"/>
    <property type="chains" value="A/B=1006-1274"/>
</dbReference>
<dbReference type="PDB" id="5O9G">
    <property type="method" value="EM"/>
    <property type="resolution" value="4.80 A"/>
    <property type="chains" value="W=1-1468"/>
</dbReference>
<dbReference type="PDB" id="6FTX">
    <property type="method" value="EM"/>
    <property type="resolution" value="4.50 A"/>
    <property type="chains" value="W=175-1269"/>
</dbReference>
<dbReference type="PDB" id="6G0L">
    <property type="method" value="EM"/>
    <property type="resolution" value="4.50 A"/>
    <property type="chains" value="M/W=1-1468"/>
</dbReference>
<dbReference type="PDB" id="7NKX">
    <property type="method" value="EM"/>
    <property type="resolution" value="2.90 A"/>
    <property type="chains" value="W=1-1468"/>
</dbReference>
<dbReference type="PDB" id="7TN2">
    <property type="method" value="EM"/>
    <property type="resolution" value="2.30 A"/>
    <property type="chains" value="W=118-1274"/>
</dbReference>
<dbReference type="PDB" id="9GD1">
    <property type="method" value="EM"/>
    <property type="resolution" value="4.00 A"/>
    <property type="chains" value="W=1-1468"/>
</dbReference>
<dbReference type="PDB" id="9GD2">
    <property type="method" value="EM"/>
    <property type="resolution" value="4.20 A"/>
    <property type="chains" value="S/T/W=1-1468"/>
</dbReference>
<dbReference type="PDB" id="9GD3">
    <property type="method" value="EM"/>
    <property type="resolution" value="3.00 A"/>
    <property type="chains" value="T/W=1-1468"/>
</dbReference>
<dbReference type="PDBsum" id="2DY7"/>
<dbReference type="PDBsum" id="2DY8"/>
<dbReference type="PDBsum" id="2H1E"/>
<dbReference type="PDBsum" id="2XB0"/>
<dbReference type="PDBsum" id="3MWY"/>
<dbReference type="PDBsum" id="3TED"/>
<dbReference type="PDBsum" id="5J70"/>
<dbReference type="PDBsum" id="5O9G"/>
<dbReference type="PDBsum" id="6FTX"/>
<dbReference type="PDBsum" id="6G0L"/>
<dbReference type="PDBsum" id="7NKX"/>
<dbReference type="PDBsum" id="7TN2"/>
<dbReference type="PDBsum" id="9GD1"/>
<dbReference type="PDBsum" id="9GD2"/>
<dbReference type="PDBsum" id="9GD3"/>
<dbReference type="EMDB" id="EMD-12449"/>
<dbReference type="EMDB" id="EMD-3765"/>
<dbReference type="EMDB" id="EMD-4336"/>
<dbReference type="EMDB" id="EMD-51241"/>
<dbReference type="EMDB" id="EMD-51244"/>
<dbReference type="EMDB" id="EMD-51247"/>
<dbReference type="SASBDB" id="P32657"/>
<dbReference type="SMR" id="P32657"/>
<dbReference type="BioGRID" id="36917">
    <property type="interactions" value="534"/>
</dbReference>
<dbReference type="ComplexPortal" id="CPX-656">
    <property type="entry name" value="SAGA complex"/>
</dbReference>
<dbReference type="ComplexPortal" id="CPX-675">
    <property type="entry name" value="SLIK (SAGA-like) complex"/>
</dbReference>
<dbReference type="DIP" id="DIP-6362N"/>
<dbReference type="FunCoup" id="P32657">
    <property type="interactions" value="1107"/>
</dbReference>
<dbReference type="IntAct" id="P32657">
    <property type="interactions" value="86"/>
</dbReference>
<dbReference type="MINT" id="P32657"/>
<dbReference type="STRING" id="4932.YER164W"/>
<dbReference type="ChEMBL" id="CHEMBL4662924"/>
<dbReference type="GlyGen" id="P32657">
    <property type="glycosylation" value="4 sites, 1 O-linked glycan (2 sites)"/>
</dbReference>
<dbReference type="iPTMnet" id="P32657"/>
<dbReference type="PaxDb" id="4932-YER164W"/>
<dbReference type="PeptideAtlas" id="P32657"/>
<dbReference type="EnsemblFungi" id="YER164W_mRNA">
    <property type="protein sequence ID" value="YER164W"/>
    <property type="gene ID" value="YER164W"/>
</dbReference>
<dbReference type="GeneID" id="856911"/>
<dbReference type="KEGG" id="sce:YER164W"/>
<dbReference type="AGR" id="SGD:S000000966"/>
<dbReference type="SGD" id="S000000966">
    <property type="gene designation" value="CHD1"/>
</dbReference>
<dbReference type="VEuPathDB" id="FungiDB:YER164W"/>
<dbReference type="eggNOG" id="KOG0384">
    <property type="taxonomic scope" value="Eukaryota"/>
</dbReference>
<dbReference type="GeneTree" id="ENSGT00940000170579"/>
<dbReference type="HOGENOM" id="CLU_000315_29_2_1"/>
<dbReference type="InParanoid" id="P32657"/>
<dbReference type="OMA" id="WVQIRDD"/>
<dbReference type="OrthoDB" id="5857104at2759"/>
<dbReference type="BioCyc" id="YEAST:G3O-30325-MONOMER"/>
<dbReference type="SABIO-RK" id="P32657"/>
<dbReference type="BioGRID-ORCS" id="856911">
    <property type="hits" value="0 hits in 10 CRISPR screens"/>
</dbReference>
<dbReference type="EvolutionaryTrace" id="P32657"/>
<dbReference type="PRO" id="PR:P32657"/>
<dbReference type="Proteomes" id="UP000002311">
    <property type="component" value="Chromosome V"/>
</dbReference>
<dbReference type="RNAct" id="P32657">
    <property type="molecule type" value="protein"/>
</dbReference>
<dbReference type="GO" id="GO:0000785">
    <property type="term" value="C:chromatin"/>
    <property type="evidence" value="ECO:0000314"/>
    <property type="project" value="SGD"/>
</dbReference>
<dbReference type="GO" id="GO:0005739">
    <property type="term" value="C:mitochondrion"/>
    <property type="evidence" value="ECO:0007005"/>
    <property type="project" value="SGD"/>
</dbReference>
<dbReference type="GO" id="GO:0030874">
    <property type="term" value="C:nucleolar chromatin"/>
    <property type="evidence" value="ECO:0000314"/>
    <property type="project" value="SGD"/>
</dbReference>
<dbReference type="GO" id="GO:0005634">
    <property type="term" value="C:nucleus"/>
    <property type="evidence" value="ECO:0000318"/>
    <property type="project" value="GO_Central"/>
</dbReference>
<dbReference type="GO" id="GO:0000124">
    <property type="term" value="C:SAGA complex"/>
    <property type="evidence" value="ECO:0000314"/>
    <property type="project" value="SGD"/>
</dbReference>
<dbReference type="GO" id="GO:0035861">
    <property type="term" value="C:site of double-strand break"/>
    <property type="evidence" value="ECO:0000314"/>
    <property type="project" value="SGD"/>
</dbReference>
<dbReference type="GO" id="GO:0046695">
    <property type="term" value="C:SLIK (SAGA-like) complex"/>
    <property type="evidence" value="ECO:0000314"/>
    <property type="project" value="SGD"/>
</dbReference>
<dbReference type="GO" id="GO:0005524">
    <property type="term" value="F:ATP binding"/>
    <property type="evidence" value="ECO:0007669"/>
    <property type="project" value="UniProtKB-KW"/>
</dbReference>
<dbReference type="GO" id="GO:0016887">
    <property type="term" value="F:ATP hydrolysis activity"/>
    <property type="evidence" value="ECO:0000318"/>
    <property type="project" value="GO_Central"/>
</dbReference>
<dbReference type="GO" id="GO:0008094">
    <property type="term" value="F:ATP-dependent activity, acting on DNA"/>
    <property type="evidence" value="ECO:0000314"/>
    <property type="project" value="SGD"/>
</dbReference>
<dbReference type="GO" id="GO:0140658">
    <property type="term" value="F:ATP-dependent chromatin remodeler activity"/>
    <property type="evidence" value="ECO:0000314"/>
    <property type="project" value="SGD"/>
</dbReference>
<dbReference type="GO" id="GO:0003682">
    <property type="term" value="F:chromatin binding"/>
    <property type="evidence" value="ECO:0000318"/>
    <property type="project" value="GO_Central"/>
</dbReference>
<dbReference type="GO" id="GO:0031490">
    <property type="term" value="F:chromatin DNA binding"/>
    <property type="evidence" value="ECO:0000314"/>
    <property type="project" value="SGD"/>
</dbReference>
<dbReference type="GO" id="GO:0003677">
    <property type="term" value="F:DNA binding"/>
    <property type="evidence" value="ECO:0000314"/>
    <property type="project" value="SGD"/>
</dbReference>
<dbReference type="GO" id="GO:0004386">
    <property type="term" value="F:helicase activity"/>
    <property type="evidence" value="ECO:0007669"/>
    <property type="project" value="UniProtKB-KW"/>
</dbReference>
<dbReference type="GO" id="GO:0042393">
    <property type="term" value="F:histone binding"/>
    <property type="evidence" value="ECO:0000318"/>
    <property type="project" value="GO_Central"/>
</dbReference>
<dbReference type="GO" id="GO:0035064">
    <property type="term" value="F:methylated histone binding"/>
    <property type="evidence" value="ECO:0000314"/>
    <property type="project" value="SGD"/>
</dbReference>
<dbReference type="GO" id="GO:0000182">
    <property type="term" value="F:rDNA binding"/>
    <property type="evidence" value="ECO:0000314"/>
    <property type="project" value="SGD"/>
</dbReference>
<dbReference type="GO" id="GO:0000976">
    <property type="term" value="F:transcription cis-regulatory region binding"/>
    <property type="evidence" value="ECO:0000314"/>
    <property type="project" value="SGD"/>
</dbReference>
<dbReference type="GO" id="GO:0006338">
    <property type="term" value="P:chromatin remodeling"/>
    <property type="evidence" value="ECO:0000314"/>
    <property type="project" value="SGD"/>
</dbReference>
<dbReference type="GO" id="GO:0000729">
    <property type="term" value="P:DNA double-strand break processing"/>
    <property type="evidence" value="ECO:0000315"/>
    <property type="project" value="SGD"/>
</dbReference>
<dbReference type="GO" id="GO:0000724">
    <property type="term" value="P:double-strand break repair via homologous recombination"/>
    <property type="evidence" value="ECO:0000315"/>
    <property type="project" value="SGD"/>
</dbReference>
<dbReference type="GO" id="GO:2000104">
    <property type="term" value="P:negative regulation of DNA-templated DNA replication"/>
    <property type="evidence" value="ECO:0000316"/>
    <property type="project" value="SGD"/>
</dbReference>
<dbReference type="GO" id="GO:0034728">
    <property type="term" value="P:nucleosome organization"/>
    <property type="evidence" value="ECO:0000315"/>
    <property type="project" value="SGD"/>
</dbReference>
<dbReference type="GO" id="GO:1902275">
    <property type="term" value="P:regulation of chromatin organization"/>
    <property type="evidence" value="ECO:0000315"/>
    <property type="project" value="SGD"/>
</dbReference>
<dbReference type="GO" id="GO:0006357">
    <property type="term" value="P:regulation of transcription by RNA polymerase II"/>
    <property type="evidence" value="ECO:0000314"/>
    <property type="project" value="ComplexPortal"/>
</dbReference>
<dbReference type="GO" id="GO:0001178">
    <property type="term" value="P:regulation of transcriptional start site selection at RNA polymerase II promoter"/>
    <property type="evidence" value="ECO:0000316"/>
    <property type="project" value="SGD"/>
</dbReference>
<dbReference type="GO" id="GO:0007062">
    <property type="term" value="P:sister chromatid cohesion"/>
    <property type="evidence" value="ECO:0000315"/>
    <property type="project" value="SGD"/>
</dbReference>
<dbReference type="GO" id="GO:0006363">
    <property type="term" value="P:termination of RNA polymerase I transcription"/>
    <property type="evidence" value="ECO:0000316"/>
    <property type="project" value="SGD"/>
</dbReference>
<dbReference type="GO" id="GO:0006369">
    <property type="term" value="P:termination of RNA polymerase II transcription"/>
    <property type="evidence" value="ECO:0000315"/>
    <property type="project" value="SGD"/>
</dbReference>
<dbReference type="GO" id="GO:0006368">
    <property type="term" value="P:transcription elongation by RNA polymerase II"/>
    <property type="evidence" value="ECO:0000316"/>
    <property type="project" value="SGD"/>
</dbReference>
<dbReference type="CDD" id="cd18665">
    <property type="entry name" value="CD1_tandem_CHD1_yeast_like"/>
    <property type="match status" value="1"/>
</dbReference>
<dbReference type="CDD" id="cd18664">
    <property type="entry name" value="CD2_tandem_ScCHD1_like"/>
    <property type="match status" value="1"/>
</dbReference>
<dbReference type="CDD" id="cd17993">
    <property type="entry name" value="DEXHc_CHD1_2"/>
    <property type="match status" value="1"/>
</dbReference>
<dbReference type="CDD" id="cd11660">
    <property type="entry name" value="SANT_TRF"/>
    <property type="match status" value="1"/>
</dbReference>
<dbReference type="CDD" id="cd18793">
    <property type="entry name" value="SF2_C_SNF"/>
    <property type="match status" value="1"/>
</dbReference>
<dbReference type="FunFam" id="2.40.50.40:FF:000038">
    <property type="entry name" value="Chromo domain-containing protein 1"/>
    <property type="match status" value="1"/>
</dbReference>
<dbReference type="FunFam" id="1.10.10.60:FF:000376">
    <property type="entry name" value="Chromodomain-helicase-DNA-binding protein 1"/>
    <property type="match status" value="1"/>
</dbReference>
<dbReference type="FunFam" id="3.40.50.10810:FF:000007">
    <property type="entry name" value="Chromodomain-helicase-DNA-binding protein 2 isoform 1"/>
    <property type="match status" value="1"/>
</dbReference>
<dbReference type="FunFam" id="3.40.50.300:FF:000130">
    <property type="entry name" value="Chromodomain-helicase-DNA-binding protein 2 isoform 1"/>
    <property type="match status" value="1"/>
</dbReference>
<dbReference type="Gene3D" id="2.40.50.40">
    <property type="match status" value="2"/>
</dbReference>
<dbReference type="Gene3D" id="6.10.140.1440">
    <property type="match status" value="1"/>
</dbReference>
<dbReference type="Gene3D" id="1.10.10.60">
    <property type="entry name" value="Homeodomain-like"/>
    <property type="match status" value="1"/>
</dbReference>
<dbReference type="Gene3D" id="3.40.50.300">
    <property type="entry name" value="P-loop containing nucleotide triphosphate hydrolases"/>
    <property type="match status" value="1"/>
</dbReference>
<dbReference type="Gene3D" id="3.40.50.10810">
    <property type="entry name" value="Tandem AAA-ATPase domain"/>
    <property type="match status" value="1"/>
</dbReference>
<dbReference type="InterPro" id="IPR041150">
    <property type="entry name" value="Cdh1_DBD"/>
</dbReference>
<dbReference type="InterPro" id="IPR056302">
    <property type="entry name" value="CHD1-2/Hrp3_HTH"/>
</dbReference>
<dbReference type="InterPro" id="IPR025260">
    <property type="entry name" value="CHD1-like_C"/>
</dbReference>
<dbReference type="InterPro" id="IPR016197">
    <property type="entry name" value="Chromo-like_dom_sf"/>
</dbReference>
<dbReference type="InterPro" id="IPR000953">
    <property type="entry name" value="Chromo/chromo_shadow_dom"/>
</dbReference>
<dbReference type="InterPro" id="IPR023780">
    <property type="entry name" value="Chromo_domain"/>
</dbReference>
<dbReference type="InterPro" id="IPR023779">
    <property type="entry name" value="Chromodomain_CS"/>
</dbReference>
<dbReference type="InterPro" id="IPR014001">
    <property type="entry name" value="Helicase_ATP-bd"/>
</dbReference>
<dbReference type="InterPro" id="IPR001650">
    <property type="entry name" value="Helicase_C-like"/>
</dbReference>
<dbReference type="InterPro" id="IPR009057">
    <property type="entry name" value="Homeodomain-like_sf"/>
</dbReference>
<dbReference type="InterPro" id="IPR027417">
    <property type="entry name" value="P-loop_NTPase"/>
</dbReference>
<dbReference type="InterPro" id="IPR038718">
    <property type="entry name" value="SNF2-like_sf"/>
</dbReference>
<dbReference type="InterPro" id="IPR049730">
    <property type="entry name" value="SNF2/RAD54-like_C"/>
</dbReference>
<dbReference type="InterPro" id="IPR000330">
    <property type="entry name" value="SNF2_N"/>
</dbReference>
<dbReference type="PANTHER" id="PTHR45623:SF14">
    <property type="entry name" value="CHROMODOMAIN-HELICASE-DNA-BINDING PROTEIN 1"/>
    <property type="match status" value="1"/>
</dbReference>
<dbReference type="PANTHER" id="PTHR45623">
    <property type="entry name" value="CHROMODOMAIN-HELICASE-DNA-BINDING PROTEIN 3-RELATED-RELATED"/>
    <property type="match status" value="1"/>
</dbReference>
<dbReference type="Pfam" id="PF18196">
    <property type="entry name" value="Cdh1_DBD_1"/>
    <property type="match status" value="1"/>
</dbReference>
<dbReference type="Pfam" id="PF13907">
    <property type="entry name" value="CHD1-like_C"/>
    <property type="match status" value="1"/>
</dbReference>
<dbReference type="Pfam" id="PF00385">
    <property type="entry name" value="Chromo"/>
    <property type="match status" value="1"/>
</dbReference>
<dbReference type="Pfam" id="PF00271">
    <property type="entry name" value="Helicase_C"/>
    <property type="match status" value="1"/>
</dbReference>
<dbReference type="Pfam" id="PF23588">
    <property type="entry name" value="HTH_CHD1_Hrp3"/>
    <property type="match status" value="1"/>
</dbReference>
<dbReference type="Pfam" id="PF00176">
    <property type="entry name" value="SNF2-rel_dom"/>
    <property type="match status" value="1"/>
</dbReference>
<dbReference type="SMART" id="SM00298">
    <property type="entry name" value="CHROMO"/>
    <property type="match status" value="2"/>
</dbReference>
<dbReference type="SMART" id="SM00487">
    <property type="entry name" value="DEXDc"/>
    <property type="match status" value="1"/>
</dbReference>
<dbReference type="SMART" id="SM01176">
    <property type="entry name" value="DUF4208"/>
    <property type="match status" value="1"/>
</dbReference>
<dbReference type="SMART" id="SM00490">
    <property type="entry name" value="HELICc"/>
    <property type="match status" value="1"/>
</dbReference>
<dbReference type="SUPFAM" id="SSF54160">
    <property type="entry name" value="Chromo domain-like"/>
    <property type="match status" value="2"/>
</dbReference>
<dbReference type="SUPFAM" id="SSF46689">
    <property type="entry name" value="Homeodomain-like"/>
    <property type="match status" value="1"/>
</dbReference>
<dbReference type="SUPFAM" id="SSF52540">
    <property type="entry name" value="P-loop containing nucleoside triphosphate hydrolases"/>
    <property type="match status" value="2"/>
</dbReference>
<dbReference type="PROSITE" id="PS00598">
    <property type="entry name" value="CHROMO_1"/>
    <property type="match status" value="2"/>
</dbReference>
<dbReference type="PROSITE" id="PS50013">
    <property type="entry name" value="CHROMO_2"/>
    <property type="match status" value="2"/>
</dbReference>
<dbReference type="PROSITE" id="PS51192">
    <property type="entry name" value="HELICASE_ATP_BIND_1"/>
    <property type="match status" value="1"/>
</dbReference>
<dbReference type="PROSITE" id="PS51194">
    <property type="entry name" value="HELICASE_CTER"/>
    <property type="match status" value="1"/>
</dbReference>
<evidence type="ECO:0000250" key="1">
    <source>
        <dbReference type="UniProtKB" id="O14646"/>
    </source>
</evidence>
<evidence type="ECO:0000255" key="2">
    <source>
        <dbReference type="PROSITE-ProRule" id="PRU00053"/>
    </source>
</evidence>
<evidence type="ECO:0000255" key="3">
    <source>
        <dbReference type="PROSITE-ProRule" id="PRU00541"/>
    </source>
</evidence>
<evidence type="ECO:0000255" key="4">
    <source>
        <dbReference type="PROSITE-ProRule" id="PRU00542"/>
    </source>
</evidence>
<evidence type="ECO:0000256" key="5">
    <source>
        <dbReference type="SAM" id="MobiDB-lite"/>
    </source>
</evidence>
<evidence type="ECO:0000269" key="6">
    <source>
    </source>
</evidence>
<evidence type="ECO:0000269" key="7">
    <source>
    </source>
</evidence>
<evidence type="ECO:0000269" key="8">
    <source>
    </source>
</evidence>
<evidence type="ECO:0000269" key="9">
    <source>
    </source>
</evidence>
<evidence type="ECO:0000269" key="10">
    <source>
    </source>
</evidence>
<evidence type="ECO:0000269" key="11">
    <source>
    </source>
</evidence>
<evidence type="ECO:0000269" key="12">
    <source>
    </source>
</evidence>
<evidence type="ECO:0000269" key="13">
    <source>
    </source>
</evidence>
<evidence type="ECO:0000269" key="14">
    <source>
    </source>
</evidence>
<evidence type="ECO:0000269" key="15">
    <source>
    </source>
</evidence>
<evidence type="ECO:0000269" key="16">
    <source>
    </source>
</evidence>
<evidence type="ECO:0000269" key="17">
    <source>
    </source>
</evidence>
<evidence type="ECO:0000269" key="18">
    <source>
    </source>
</evidence>
<evidence type="ECO:0000269" key="19">
    <source>
    </source>
</evidence>
<evidence type="ECO:0000269" key="20">
    <source>
    </source>
</evidence>
<evidence type="ECO:0000269" key="21">
    <source>
    </source>
</evidence>
<evidence type="ECO:0000269" key="22">
    <source>
    </source>
</evidence>
<evidence type="ECO:0000269" key="23">
    <source>
    </source>
</evidence>
<evidence type="ECO:0000305" key="24"/>
<evidence type="ECO:0000305" key="25">
    <source>
    </source>
</evidence>
<evidence type="ECO:0007744" key="26">
    <source>
    </source>
</evidence>
<evidence type="ECO:0007744" key="27">
    <source>
    </source>
</evidence>
<evidence type="ECO:0007744" key="28">
    <source>
    </source>
</evidence>
<evidence type="ECO:0007744" key="29">
    <source>
    </source>
</evidence>
<evidence type="ECO:0007829" key="30">
    <source>
        <dbReference type="PDB" id="2DY7"/>
    </source>
</evidence>
<evidence type="ECO:0007829" key="31">
    <source>
        <dbReference type="PDB" id="2DY8"/>
    </source>
</evidence>
<evidence type="ECO:0007829" key="32">
    <source>
        <dbReference type="PDB" id="2H1E"/>
    </source>
</evidence>
<evidence type="ECO:0007829" key="33">
    <source>
        <dbReference type="PDB" id="2XB0"/>
    </source>
</evidence>
<evidence type="ECO:0007829" key="34">
    <source>
        <dbReference type="PDB" id="3TED"/>
    </source>
</evidence>
<evidence type="ECO:0007829" key="35">
    <source>
        <dbReference type="PDB" id="7NKX"/>
    </source>
</evidence>
<evidence type="ECO:0007829" key="36">
    <source>
        <dbReference type="PDB" id="7TN2"/>
    </source>
</evidence>
<evidence type="ECO:0007829" key="37">
    <source>
        <dbReference type="PDB" id="9GD3"/>
    </source>
</evidence>
<accession>P32657</accession>
<accession>D3DM72</accession>